<name>LGT_MYCTO</name>
<gene>
    <name evidence="1" type="primary">lgt</name>
    <name type="ordered locus">MT1649</name>
</gene>
<accession>P9WK92</accession>
<accession>L0TA60</accession>
<accession>O06131</accession>
<keyword id="KW-1003">Cell membrane</keyword>
<keyword id="KW-0472">Membrane</keyword>
<keyword id="KW-1185">Reference proteome</keyword>
<keyword id="KW-0808">Transferase</keyword>
<keyword id="KW-0812">Transmembrane</keyword>
<keyword id="KW-1133">Transmembrane helix</keyword>
<feature type="chain" id="PRO_0000427694" description="Phosphatidylglycerol--prolipoprotein diacylglyceryl transferase">
    <location>
        <begin position="1"/>
        <end position="468"/>
    </location>
</feature>
<feature type="transmembrane region" description="Helical" evidence="1">
    <location>
        <begin position="21"/>
        <end position="41"/>
    </location>
</feature>
<feature type="transmembrane region" description="Helical" evidence="1">
    <location>
        <begin position="56"/>
        <end position="76"/>
    </location>
</feature>
<feature type="transmembrane region" description="Helical" evidence="1">
    <location>
        <begin position="96"/>
        <end position="116"/>
    </location>
</feature>
<feature type="transmembrane region" description="Helical" evidence="1">
    <location>
        <begin position="192"/>
        <end position="212"/>
    </location>
</feature>
<feature type="transmembrane region" description="Helical" evidence="1">
    <location>
        <begin position="218"/>
        <end position="238"/>
    </location>
</feature>
<feature type="transmembrane region" description="Helical" evidence="1">
    <location>
        <begin position="256"/>
        <end position="276"/>
    </location>
</feature>
<feature type="region of interest" description="Disordered" evidence="2">
    <location>
        <begin position="349"/>
        <end position="468"/>
    </location>
</feature>
<feature type="compositionally biased region" description="Low complexity" evidence="2">
    <location>
        <begin position="391"/>
        <end position="406"/>
    </location>
</feature>
<feature type="compositionally biased region" description="Basic and acidic residues" evidence="2">
    <location>
        <begin position="445"/>
        <end position="455"/>
    </location>
</feature>
<feature type="compositionally biased region" description="Basic residues" evidence="2">
    <location>
        <begin position="456"/>
        <end position="468"/>
    </location>
</feature>
<feature type="binding site" evidence="1">
    <location>
        <position position="144"/>
    </location>
    <ligand>
        <name>a 1,2-diacyl-sn-glycero-3-phospho-(1'-sn-glycerol)</name>
        <dbReference type="ChEBI" id="CHEBI:64716"/>
    </ligand>
</feature>
<sequence length="468" mass="50392">MRMLPSYIPSPPRGVWYLGPLPVRAYAVCVITGIIVALLIGDRRLTARGGERGMTYDIALWAVPFGLIGGRLYHLATDWRTYFGDGGAGLAAALRIWDGGLGIWGAVTLGVMGAWIGCRRCGIPLPVLLDAVAPGVVLAQAIGRLGNYFNQELYGRETTMPWGLEIFYRRDPSGFDVPNSLDGVSTGQVAFVVQPTFLYELIWNVLVFVALIYIDRRFIIGHGRLFGFYVAFYCAGRFCVELLRDDPATLIAGIRINSFTSTFVFIGAVVYIILAPKGREAPGALRGSEYVVDEALEREPAELAAAAVASAASAVGPVGPGEPNQPDDVAEAVKAEVAEVTDEVAAESVVQVADRDGESTPAVEETSEADIEREQPGDLAGQAPAAHQVDAEAASAAPEEPAALASEAHDETEPEVPEKAAPIPDPAKPDELAVAGPGDDPAEPDGIRRQDDFSSRRRRWWRLRRRRQ</sequence>
<organism>
    <name type="scientific">Mycobacterium tuberculosis (strain CDC 1551 / Oshkosh)</name>
    <dbReference type="NCBI Taxonomy" id="83331"/>
    <lineage>
        <taxon>Bacteria</taxon>
        <taxon>Bacillati</taxon>
        <taxon>Actinomycetota</taxon>
        <taxon>Actinomycetes</taxon>
        <taxon>Mycobacteriales</taxon>
        <taxon>Mycobacteriaceae</taxon>
        <taxon>Mycobacterium</taxon>
        <taxon>Mycobacterium tuberculosis complex</taxon>
    </lineage>
</organism>
<proteinExistence type="inferred from homology"/>
<reference key="1">
    <citation type="journal article" date="2002" name="J. Bacteriol.">
        <title>Whole-genome comparison of Mycobacterium tuberculosis clinical and laboratory strains.</title>
        <authorList>
            <person name="Fleischmann R.D."/>
            <person name="Alland D."/>
            <person name="Eisen J.A."/>
            <person name="Carpenter L."/>
            <person name="White O."/>
            <person name="Peterson J.D."/>
            <person name="DeBoy R.T."/>
            <person name="Dodson R.J."/>
            <person name="Gwinn M.L."/>
            <person name="Haft D.H."/>
            <person name="Hickey E.K."/>
            <person name="Kolonay J.F."/>
            <person name="Nelson W.C."/>
            <person name="Umayam L.A."/>
            <person name="Ermolaeva M.D."/>
            <person name="Salzberg S.L."/>
            <person name="Delcher A."/>
            <person name="Utterback T.R."/>
            <person name="Weidman J.F."/>
            <person name="Khouri H.M."/>
            <person name="Gill J."/>
            <person name="Mikula A."/>
            <person name="Bishai W."/>
            <person name="Jacobs W.R. Jr."/>
            <person name="Venter J.C."/>
            <person name="Fraser C.M."/>
        </authorList>
    </citation>
    <scope>NUCLEOTIDE SEQUENCE [LARGE SCALE GENOMIC DNA]</scope>
    <source>
        <strain>CDC 1551 / Oshkosh</strain>
    </source>
</reference>
<evidence type="ECO:0000255" key="1">
    <source>
        <dbReference type="HAMAP-Rule" id="MF_01147"/>
    </source>
</evidence>
<evidence type="ECO:0000256" key="2">
    <source>
        <dbReference type="SAM" id="MobiDB-lite"/>
    </source>
</evidence>
<dbReference type="EC" id="2.5.1.145" evidence="1"/>
<dbReference type="EMBL" id="AE000516">
    <property type="protein sequence ID" value="AAK45918.1"/>
    <property type="molecule type" value="Genomic_DNA"/>
</dbReference>
<dbReference type="PIR" id="D70557">
    <property type="entry name" value="D70557"/>
</dbReference>
<dbReference type="RefSeq" id="WP_003408002.1">
    <property type="nucleotide sequence ID" value="NZ_KK341227.1"/>
</dbReference>
<dbReference type="SMR" id="P9WK92"/>
<dbReference type="KEGG" id="mtc:MT1649"/>
<dbReference type="PATRIC" id="fig|83331.31.peg.1772"/>
<dbReference type="HOGENOM" id="CLU_013386_2_1_11"/>
<dbReference type="UniPathway" id="UPA00664"/>
<dbReference type="Proteomes" id="UP000001020">
    <property type="component" value="Chromosome"/>
</dbReference>
<dbReference type="GO" id="GO:0005886">
    <property type="term" value="C:plasma membrane"/>
    <property type="evidence" value="ECO:0007669"/>
    <property type="project" value="UniProtKB-SubCell"/>
</dbReference>
<dbReference type="GO" id="GO:0008961">
    <property type="term" value="F:phosphatidylglycerol-prolipoprotein diacylglyceryl transferase activity"/>
    <property type="evidence" value="ECO:0007669"/>
    <property type="project" value="UniProtKB-UniRule"/>
</dbReference>
<dbReference type="GO" id="GO:0042158">
    <property type="term" value="P:lipoprotein biosynthetic process"/>
    <property type="evidence" value="ECO:0007669"/>
    <property type="project" value="UniProtKB-UniRule"/>
</dbReference>
<dbReference type="HAMAP" id="MF_01147">
    <property type="entry name" value="Lgt"/>
    <property type="match status" value="1"/>
</dbReference>
<dbReference type="InterPro" id="IPR001640">
    <property type="entry name" value="Lgt"/>
</dbReference>
<dbReference type="NCBIfam" id="TIGR00544">
    <property type="entry name" value="lgt"/>
    <property type="match status" value="1"/>
</dbReference>
<dbReference type="NCBIfam" id="NF009611">
    <property type="entry name" value="PRK13108.1"/>
    <property type="match status" value="1"/>
</dbReference>
<dbReference type="PANTHER" id="PTHR30589:SF0">
    <property type="entry name" value="PHOSPHATIDYLGLYCEROL--PROLIPOPROTEIN DIACYLGLYCERYL TRANSFERASE"/>
    <property type="match status" value="1"/>
</dbReference>
<dbReference type="PANTHER" id="PTHR30589">
    <property type="entry name" value="PROLIPOPROTEIN DIACYLGLYCERYL TRANSFERASE"/>
    <property type="match status" value="1"/>
</dbReference>
<dbReference type="Pfam" id="PF01790">
    <property type="entry name" value="LGT"/>
    <property type="match status" value="1"/>
</dbReference>
<dbReference type="PROSITE" id="PS01311">
    <property type="entry name" value="LGT"/>
    <property type="match status" value="1"/>
</dbReference>
<comment type="function">
    <text evidence="1">Catalyzes the transfer of the diacylglyceryl group from phosphatidylglycerol to the sulfhydryl group of the N-terminal cysteine of a prolipoprotein, the first step in the formation of mature lipoproteins.</text>
</comment>
<comment type="catalytic activity">
    <reaction evidence="1">
        <text>L-cysteinyl-[prolipoprotein] + a 1,2-diacyl-sn-glycero-3-phospho-(1'-sn-glycerol) = an S-1,2-diacyl-sn-glyceryl-L-cysteinyl-[prolipoprotein] + sn-glycerol 1-phosphate + H(+)</text>
        <dbReference type="Rhea" id="RHEA:56712"/>
        <dbReference type="Rhea" id="RHEA-COMP:14679"/>
        <dbReference type="Rhea" id="RHEA-COMP:14680"/>
        <dbReference type="ChEBI" id="CHEBI:15378"/>
        <dbReference type="ChEBI" id="CHEBI:29950"/>
        <dbReference type="ChEBI" id="CHEBI:57685"/>
        <dbReference type="ChEBI" id="CHEBI:64716"/>
        <dbReference type="ChEBI" id="CHEBI:140658"/>
        <dbReference type="EC" id="2.5.1.145"/>
    </reaction>
</comment>
<comment type="pathway">
    <text evidence="1">Protein modification; lipoprotein biosynthesis (diacylglyceryl transfer).</text>
</comment>
<comment type="subcellular location">
    <subcellularLocation>
        <location evidence="1">Cell membrane</location>
        <topology evidence="1">Multi-pass membrane protein</topology>
    </subcellularLocation>
</comment>
<comment type="similarity">
    <text evidence="1">Belongs to the Lgt family.</text>
</comment>
<protein>
    <recommendedName>
        <fullName evidence="1">Phosphatidylglycerol--prolipoprotein diacylglyceryl transferase</fullName>
        <ecNumber evidence="1">2.5.1.145</ecNumber>
    </recommendedName>
</protein>